<comment type="function">
    <text evidence="1">The coatomer is a cytosolic protein complex that binds to dilysine motifs and reversibly associates with Golgi non-clathrin-coated vesicles, which further mediate biosynthetic protein transport from the ER, via the Golgi up to the trans Golgi network. Coatomer complex is required for budding from Golgi membranes, and is essential for the retrograde Golgi-to-ER transport of dilysine-tagged proteins (By similarity).</text>
</comment>
<comment type="subunit">
    <text evidence="1">Oligomeric complex that consists of at least the alpha, beta, beta', gamma, delta, epsilon and zeta subunits.</text>
</comment>
<comment type="subcellular location">
    <subcellularLocation>
        <location evidence="1">Cytoplasm</location>
    </subcellularLocation>
    <subcellularLocation>
        <location evidence="1">Golgi apparatus membrane</location>
        <topology evidence="1">Peripheral membrane protein</topology>
        <orientation evidence="1">Cytoplasmic side</orientation>
    </subcellularLocation>
    <subcellularLocation>
        <location evidence="1">Cytoplasmic vesicle</location>
        <location evidence="1">COPI-coated vesicle membrane</location>
        <topology evidence="1">Peripheral membrane protein</topology>
        <orientation evidence="1">Cytoplasmic side</orientation>
    </subcellularLocation>
    <text evidence="1">The coatomer is cytoplasmic or polymerized on the cytoplasmic side of the Golgi, as well as on the vesicles/buds originating from it.</text>
</comment>
<comment type="sequence caution" evidence="3">
    <conflict type="frameshift">
        <sequence resource="EMBL" id="AK058652"/>
    </conflict>
</comment>
<comment type="sequence caution" evidence="3">
    <conflict type="erroneous gene model prediction">
        <sequence resource="EMBL-CDS" id="BAF12971"/>
    </conflict>
</comment>
<evidence type="ECO:0000250" key="1"/>
<evidence type="ECO:0000256" key="2">
    <source>
        <dbReference type="SAM" id="MobiDB-lite"/>
    </source>
</evidence>
<evidence type="ECO:0000305" key="3"/>
<keyword id="KW-0963">Cytoplasm</keyword>
<keyword id="KW-0968">Cytoplasmic vesicle</keyword>
<keyword id="KW-0931">ER-Golgi transport</keyword>
<keyword id="KW-0333">Golgi apparatus</keyword>
<keyword id="KW-0472">Membrane</keyword>
<keyword id="KW-0653">Protein transport</keyword>
<keyword id="KW-1185">Reference proteome</keyword>
<keyword id="KW-0677">Repeat</keyword>
<keyword id="KW-0813">Transport</keyword>
<keyword id="KW-0853">WD repeat</keyword>
<name>COPA2_ORYSJ</name>
<reference key="1">
    <citation type="journal article" date="2005" name="Genome Res.">
        <title>Sequence, annotation, and analysis of synteny between rice chromosome 3 and diverged grass species.</title>
        <authorList>
            <consortium name="The rice chromosome 3 sequencing consortium"/>
            <person name="Buell C.R."/>
            <person name="Yuan Q."/>
            <person name="Ouyang S."/>
            <person name="Liu J."/>
            <person name="Zhu W."/>
            <person name="Wang A."/>
            <person name="Maiti R."/>
            <person name="Haas B."/>
            <person name="Wortman J."/>
            <person name="Pertea M."/>
            <person name="Jones K.M."/>
            <person name="Kim M."/>
            <person name="Overton L."/>
            <person name="Tsitrin T."/>
            <person name="Fadrosh D."/>
            <person name="Bera J."/>
            <person name="Weaver B."/>
            <person name="Jin S."/>
            <person name="Johri S."/>
            <person name="Reardon M."/>
            <person name="Webb K."/>
            <person name="Hill J."/>
            <person name="Moffat K."/>
            <person name="Tallon L."/>
            <person name="Van Aken S."/>
            <person name="Lewis M."/>
            <person name="Utterback T."/>
            <person name="Feldblyum T."/>
            <person name="Zismann V."/>
            <person name="Iobst S."/>
            <person name="Hsiao J."/>
            <person name="de Vazeille A.R."/>
            <person name="Salzberg S.L."/>
            <person name="White O."/>
            <person name="Fraser C.M."/>
            <person name="Yu Y."/>
            <person name="Kim H."/>
            <person name="Rambo T."/>
            <person name="Currie J."/>
            <person name="Collura K."/>
            <person name="Kernodle-Thompson S."/>
            <person name="Wei F."/>
            <person name="Kudrna K."/>
            <person name="Ammiraju J.S.S."/>
            <person name="Luo M."/>
            <person name="Goicoechea J.L."/>
            <person name="Wing R.A."/>
            <person name="Henry D."/>
            <person name="Oates R."/>
            <person name="Palmer M."/>
            <person name="Pries G."/>
            <person name="Saski C."/>
            <person name="Simmons J."/>
            <person name="Soderlund C."/>
            <person name="Nelson W."/>
            <person name="de la Bastide M."/>
            <person name="Spiegel L."/>
            <person name="Nascimento L."/>
            <person name="Huang E."/>
            <person name="Preston R."/>
            <person name="Zutavern T."/>
            <person name="Palmer L."/>
            <person name="O'Shaughnessy A."/>
            <person name="Dike S."/>
            <person name="McCombie W.R."/>
            <person name="Minx P."/>
            <person name="Cordum H."/>
            <person name="Wilson R."/>
            <person name="Jin W."/>
            <person name="Lee H.R."/>
            <person name="Jiang J."/>
            <person name="Jackson S."/>
        </authorList>
    </citation>
    <scope>NUCLEOTIDE SEQUENCE [LARGE SCALE GENOMIC DNA]</scope>
    <source>
        <strain>cv. Nipponbare</strain>
    </source>
</reference>
<reference key="2">
    <citation type="journal article" date="2005" name="Nature">
        <title>The map-based sequence of the rice genome.</title>
        <authorList>
            <consortium name="International rice genome sequencing project (IRGSP)"/>
        </authorList>
    </citation>
    <scope>NUCLEOTIDE SEQUENCE [LARGE SCALE GENOMIC DNA]</scope>
    <source>
        <strain>cv. Nipponbare</strain>
    </source>
</reference>
<reference key="3">
    <citation type="journal article" date="2008" name="Nucleic Acids Res.">
        <title>The rice annotation project database (RAP-DB): 2008 update.</title>
        <authorList>
            <consortium name="The rice annotation project (RAP)"/>
        </authorList>
    </citation>
    <scope>GENOME REANNOTATION</scope>
    <source>
        <strain>cv. Nipponbare</strain>
    </source>
</reference>
<reference key="4">
    <citation type="journal article" date="2013" name="Rice">
        <title>Improvement of the Oryza sativa Nipponbare reference genome using next generation sequence and optical map data.</title>
        <authorList>
            <person name="Kawahara Y."/>
            <person name="de la Bastide M."/>
            <person name="Hamilton J.P."/>
            <person name="Kanamori H."/>
            <person name="McCombie W.R."/>
            <person name="Ouyang S."/>
            <person name="Schwartz D.C."/>
            <person name="Tanaka T."/>
            <person name="Wu J."/>
            <person name="Zhou S."/>
            <person name="Childs K.L."/>
            <person name="Davidson R.M."/>
            <person name="Lin H."/>
            <person name="Quesada-Ocampo L."/>
            <person name="Vaillancourt B."/>
            <person name="Sakai H."/>
            <person name="Lee S.S."/>
            <person name="Kim J."/>
            <person name="Numa H."/>
            <person name="Itoh T."/>
            <person name="Buell C.R."/>
            <person name="Matsumoto T."/>
        </authorList>
    </citation>
    <scope>GENOME REANNOTATION</scope>
    <source>
        <strain>cv. Nipponbare</strain>
    </source>
</reference>
<reference key="5">
    <citation type="journal article" date="2005" name="PLoS Biol.">
        <title>The genomes of Oryza sativa: a history of duplications.</title>
        <authorList>
            <person name="Yu J."/>
            <person name="Wang J."/>
            <person name="Lin W."/>
            <person name="Li S."/>
            <person name="Li H."/>
            <person name="Zhou J."/>
            <person name="Ni P."/>
            <person name="Dong W."/>
            <person name="Hu S."/>
            <person name="Zeng C."/>
            <person name="Zhang J."/>
            <person name="Zhang Y."/>
            <person name="Li R."/>
            <person name="Xu Z."/>
            <person name="Li S."/>
            <person name="Li X."/>
            <person name="Zheng H."/>
            <person name="Cong L."/>
            <person name="Lin L."/>
            <person name="Yin J."/>
            <person name="Geng J."/>
            <person name="Li G."/>
            <person name="Shi J."/>
            <person name="Liu J."/>
            <person name="Lv H."/>
            <person name="Li J."/>
            <person name="Wang J."/>
            <person name="Deng Y."/>
            <person name="Ran L."/>
            <person name="Shi X."/>
            <person name="Wang X."/>
            <person name="Wu Q."/>
            <person name="Li C."/>
            <person name="Ren X."/>
            <person name="Wang J."/>
            <person name="Wang X."/>
            <person name="Li D."/>
            <person name="Liu D."/>
            <person name="Zhang X."/>
            <person name="Ji Z."/>
            <person name="Zhao W."/>
            <person name="Sun Y."/>
            <person name="Zhang Z."/>
            <person name="Bao J."/>
            <person name="Han Y."/>
            <person name="Dong L."/>
            <person name="Ji J."/>
            <person name="Chen P."/>
            <person name="Wu S."/>
            <person name="Liu J."/>
            <person name="Xiao Y."/>
            <person name="Bu D."/>
            <person name="Tan J."/>
            <person name="Yang L."/>
            <person name="Ye C."/>
            <person name="Zhang J."/>
            <person name="Xu J."/>
            <person name="Zhou Y."/>
            <person name="Yu Y."/>
            <person name="Zhang B."/>
            <person name="Zhuang S."/>
            <person name="Wei H."/>
            <person name="Liu B."/>
            <person name="Lei M."/>
            <person name="Yu H."/>
            <person name="Li Y."/>
            <person name="Xu H."/>
            <person name="Wei S."/>
            <person name="He X."/>
            <person name="Fang L."/>
            <person name="Zhang Z."/>
            <person name="Zhang Y."/>
            <person name="Huang X."/>
            <person name="Su Z."/>
            <person name="Tong W."/>
            <person name="Li J."/>
            <person name="Tong Z."/>
            <person name="Li S."/>
            <person name="Ye J."/>
            <person name="Wang L."/>
            <person name="Fang L."/>
            <person name="Lei T."/>
            <person name="Chen C.-S."/>
            <person name="Chen H.-C."/>
            <person name="Xu Z."/>
            <person name="Li H."/>
            <person name="Huang H."/>
            <person name="Zhang F."/>
            <person name="Xu H."/>
            <person name="Li N."/>
            <person name="Zhao C."/>
            <person name="Li S."/>
            <person name="Dong L."/>
            <person name="Huang Y."/>
            <person name="Li L."/>
            <person name="Xi Y."/>
            <person name="Qi Q."/>
            <person name="Li W."/>
            <person name="Zhang B."/>
            <person name="Hu W."/>
            <person name="Zhang Y."/>
            <person name="Tian X."/>
            <person name="Jiao Y."/>
            <person name="Liang X."/>
            <person name="Jin J."/>
            <person name="Gao L."/>
            <person name="Zheng W."/>
            <person name="Hao B."/>
            <person name="Liu S.-M."/>
            <person name="Wang W."/>
            <person name="Yuan L."/>
            <person name="Cao M."/>
            <person name="McDermott J."/>
            <person name="Samudrala R."/>
            <person name="Wang J."/>
            <person name="Wong G.K.-S."/>
            <person name="Yang H."/>
        </authorList>
    </citation>
    <scope>NUCLEOTIDE SEQUENCE [LARGE SCALE GENOMIC DNA]</scope>
    <source>
        <strain>cv. Nipponbare</strain>
    </source>
</reference>
<reference key="6">
    <citation type="journal article" date="2003" name="Science">
        <title>Collection, mapping, and annotation of over 28,000 cDNA clones from japonica rice.</title>
        <authorList>
            <consortium name="The rice full-length cDNA consortium"/>
        </authorList>
    </citation>
    <scope>NUCLEOTIDE SEQUENCE [LARGE SCALE MRNA] OF 644-1218</scope>
    <source>
        <strain>cv. Nipponbare</strain>
    </source>
</reference>
<dbReference type="EMBL" id="AC082645">
    <property type="protein sequence ID" value="AAK18837.1"/>
    <property type="molecule type" value="Genomic_DNA"/>
</dbReference>
<dbReference type="EMBL" id="DP000009">
    <property type="protein sequence ID" value="ABF98514.1"/>
    <property type="molecule type" value="Genomic_DNA"/>
</dbReference>
<dbReference type="EMBL" id="AP008209">
    <property type="protein sequence ID" value="BAF12971.1"/>
    <property type="status" value="ALT_SEQ"/>
    <property type="molecule type" value="Genomic_DNA"/>
</dbReference>
<dbReference type="EMBL" id="AP014959">
    <property type="status" value="NOT_ANNOTATED_CDS"/>
    <property type="molecule type" value="Genomic_DNA"/>
</dbReference>
<dbReference type="EMBL" id="CM000140">
    <property type="protein sequence ID" value="EAZ28340.1"/>
    <property type="molecule type" value="Genomic_DNA"/>
</dbReference>
<dbReference type="EMBL" id="AK058652">
    <property type="status" value="NOT_ANNOTATED_CDS"/>
    <property type="molecule type" value="mRNA"/>
</dbReference>
<dbReference type="RefSeq" id="XP_015631140.1">
    <property type="nucleotide sequence ID" value="XM_015775654.1"/>
</dbReference>
<dbReference type="SMR" id="Q9AUR7"/>
<dbReference type="FunCoup" id="Q9AUR7">
    <property type="interactions" value="3497"/>
</dbReference>
<dbReference type="STRING" id="39947.Q9AUR7"/>
<dbReference type="PaxDb" id="39947-Q9AUR7"/>
<dbReference type="KEGG" id="dosa:Os03g0711500"/>
<dbReference type="InParanoid" id="Q9AUR7"/>
<dbReference type="OrthoDB" id="10261470at2759"/>
<dbReference type="Proteomes" id="UP000000763">
    <property type="component" value="Chromosome 3"/>
</dbReference>
<dbReference type="Proteomes" id="UP000007752">
    <property type="component" value="Chromosome 3"/>
</dbReference>
<dbReference type="Proteomes" id="UP000059680">
    <property type="component" value="Chromosome 3"/>
</dbReference>
<dbReference type="GO" id="GO:0030126">
    <property type="term" value="C:COPI vesicle coat"/>
    <property type="evidence" value="ECO:0000318"/>
    <property type="project" value="GO_Central"/>
</dbReference>
<dbReference type="GO" id="GO:0000139">
    <property type="term" value="C:Golgi membrane"/>
    <property type="evidence" value="ECO:0007669"/>
    <property type="project" value="UniProtKB-SubCell"/>
</dbReference>
<dbReference type="GO" id="GO:0005198">
    <property type="term" value="F:structural molecule activity"/>
    <property type="evidence" value="ECO:0007669"/>
    <property type="project" value="InterPro"/>
</dbReference>
<dbReference type="GO" id="GO:0006888">
    <property type="term" value="P:endoplasmic reticulum to Golgi vesicle-mediated transport"/>
    <property type="evidence" value="ECO:0000318"/>
    <property type="project" value="GO_Central"/>
</dbReference>
<dbReference type="GO" id="GO:0006891">
    <property type="term" value="P:intra-Golgi vesicle-mediated transport"/>
    <property type="evidence" value="ECO:0000318"/>
    <property type="project" value="GO_Central"/>
</dbReference>
<dbReference type="GO" id="GO:0006886">
    <property type="term" value="P:intracellular protein transport"/>
    <property type="evidence" value="ECO:0000318"/>
    <property type="project" value="GO_Central"/>
</dbReference>
<dbReference type="GO" id="GO:0006890">
    <property type="term" value="P:retrograde vesicle-mediated transport, Golgi to endoplasmic reticulum"/>
    <property type="evidence" value="ECO:0000318"/>
    <property type="project" value="GO_Central"/>
</dbReference>
<dbReference type="CDD" id="cd22948">
    <property type="entry name" value="Coatomer_WDAD_alpha"/>
    <property type="match status" value="1"/>
</dbReference>
<dbReference type="CDD" id="cd00200">
    <property type="entry name" value="WD40"/>
    <property type="match status" value="1"/>
</dbReference>
<dbReference type="FunFam" id="1.25.40.470:FF:000002">
    <property type="entry name" value="Coatomer subunit alpha"/>
    <property type="match status" value="1"/>
</dbReference>
<dbReference type="FunFam" id="2.130.10.10:FF:000010">
    <property type="entry name" value="Coatomer subunit alpha"/>
    <property type="match status" value="1"/>
</dbReference>
<dbReference type="Gene3D" id="1.25.40.470">
    <property type="match status" value="1"/>
</dbReference>
<dbReference type="Gene3D" id="2.130.10.10">
    <property type="entry name" value="YVTN repeat-like/Quinoprotein amine dehydrogenase"/>
    <property type="match status" value="1"/>
</dbReference>
<dbReference type="InterPro" id="IPR006692">
    <property type="entry name" value="Beta-prop_COPA/B_2nd"/>
</dbReference>
<dbReference type="InterPro" id="IPR047312">
    <property type="entry name" value="Coatomer_alpha_WD-assoc_reg"/>
</dbReference>
<dbReference type="InterPro" id="IPR016391">
    <property type="entry name" value="Coatomer_asu"/>
</dbReference>
<dbReference type="InterPro" id="IPR010714">
    <property type="entry name" value="Coatomer_asu_C"/>
</dbReference>
<dbReference type="InterPro" id="IPR050844">
    <property type="entry name" value="Coatomer_complex_subunit"/>
</dbReference>
<dbReference type="InterPro" id="IPR020472">
    <property type="entry name" value="G-protein_beta_WD-40_rep"/>
</dbReference>
<dbReference type="InterPro" id="IPR056176">
    <property type="entry name" value="TPR_COPA_B"/>
</dbReference>
<dbReference type="InterPro" id="IPR015943">
    <property type="entry name" value="WD40/YVTN_repeat-like_dom_sf"/>
</dbReference>
<dbReference type="InterPro" id="IPR019775">
    <property type="entry name" value="WD40_repeat_CS"/>
</dbReference>
<dbReference type="InterPro" id="IPR036322">
    <property type="entry name" value="WD40_repeat_dom_sf"/>
</dbReference>
<dbReference type="InterPro" id="IPR001680">
    <property type="entry name" value="WD40_rpt"/>
</dbReference>
<dbReference type="PANTHER" id="PTHR19876">
    <property type="entry name" value="COATOMER"/>
    <property type="match status" value="1"/>
</dbReference>
<dbReference type="PANTHER" id="PTHR19876:SF1">
    <property type="entry name" value="COATOMER SUBUNIT ALPHA"/>
    <property type="match status" value="1"/>
</dbReference>
<dbReference type="Pfam" id="PF04053">
    <property type="entry name" value="B-prop_COPA_B_2nd"/>
    <property type="match status" value="1"/>
</dbReference>
<dbReference type="Pfam" id="PF06957">
    <property type="entry name" value="COPI_C"/>
    <property type="match status" value="1"/>
</dbReference>
<dbReference type="Pfam" id="PF23953">
    <property type="entry name" value="TPR_COPA_B"/>
    <property type="match status" value="1"/>
</dbReference>
<dbReference type="Pfam" id="PF00400">
    <property type="entry name" value="WD40"/>
    <property type="match status" value="5"/>
</dbReference>
<dbReference type="PIRSF" id="PIRSF003354">
    <property type="entry name" value="Coatomer_alpha_subunit"/>
    <property type="match status" value="1"/>
</dbReference>
<dbReference type="PRINTS" id="PR00320">
    <property type="entry name" value="GPROTEINBRPT"/>
</dbReference>
<dbReference type="SMART" id="SM00320">
    <property type="entry name" value="WD40"/>
    <property type="match status" value="7"/>
</dbReference>
<dbReference type="SUPFAM" id="SSF82171">
    <property type="entry name" value="DPP6 N-terminal domain-like"/>
    <property type="match status" value="1"/>
</dbReference>
<dbReference type="SUPFAM" id="SSF50978">
    <property type="entry name" value="WD40 repeat-like"/>
    <property type="match status" value="1"/>
</dbReference>
<dbReference type="PROSITE" id="PS00678">
    <property type="entry name" value="WD_REPEATS_1"/>
    <property type="match status" value="1"/>
</dbReference>
<dbReference type="PROSITE" id="PS50082">
    <property type="entry name" value="WD_REPEATS_2"/>
    <property type="match status" value="5"/>
</dbReference>
<dbReference type="PROSITE" id="PS50294">
    <property type="entry name" value="WD_REPEATS_REGION"/>
    <property type="match status" value="1"/>
</dbReference>
<feature type="chain" id="PRO_0000285602" description="Coatomer subunit alpha-2">
    <location>
        <begin position="1"/>
        <end position="1218"/>
    </location>
</feature>
<feature type="repeat" description="WD 1">
    <location>
        <begin position="7"/>
        <end position="48"/>
    </location>
</feature>
<feature type="repeat" description="WD 2">
    <location>
        <begin position="49"/>
        <end position="88"/>
    </location>
</feature>
<feature type="repeat" description="WD 3">
    <location>
        <begin position="91"/>
        <end position="132"/>
    </location>
</feature>
<feature type="repeat" description="WD 4">
    <location>
        <begin position="133"/>
        <end position="172"/>
    </location>
</feature>
<feature type="repeat" description="WD 5">
    <location>
        <begin position="202"/>
        <end position="241"/>
    </location>
</feature>
<feature type="repeat" description="WD 6">
    <location>
        <begin position="246"/>
        <end position="285"/>
    </location>
</feature>
<feature type="repeat" description="WD 7">
    <location>
        <begin position="288"/>
        <end position="326"/>
    </location>
</feature>
<feature type="repeat" description="WD 8">
    <location>
        <begin position="363"/>
        <end position="404"/>
    </location>
</feature>
<feature type="region of interest" description="Disordered" evidence="2">
    <location>
        <begin position="855"/>
        <end position="876"/>
    </location>
</feature>
<feature type="compositionally biased region" description="Acidic residues" evidence="2">
    <location>
        <begin position="862"/>
        <end position="876"/>
    </location>
</feature>
<feature type="sequence conflict" description="In Ref. 6; AK058652." evidence="3" ref="6">
    <original>E</original>
    <variation>G</variation>
    <location>
        <position position="669"/>
    </location>
</feature>
<feature type="sequence conflict" description="In Ref. 6; AK058652." evidence="3" ref="6">
    <original>D</original>
    <variation>G</variation>
    <location>
        <position position="1176"/>
    </location>
</feature>
<proteinExistence type="evidence at transcript level"/>
<protein>
    <recommendedName>
        <fullName>Coatomer subunit alpha-2</fullName>
    </recommendedName>
    <alternativeName>
        <fullName>Alpha-coat protein 2</fullName>
        <shortName>Alpha-COP 2</shortName>
    </alternativeName>
</protein>
<gene>
    <name type="ordered locus">Os03g0711500</name>
    <name type="ordered locus">LOC_Os03g50350</name>
    <name type="ORF">OsJ_011823</name>
    <name type="ORF">OSJNBb0033N16.11</name>
</gene>
<organism>
    <name type="scientific">Oryza sativa subsp. japonica</name>
    <name type="common">Rice</name>
    <dbReference type="NCBI Taxonomy" id="39947"/>
    <lineage>
        <taxon>Eukaryota</taxon>
        <taxon>Viridiplantae</taxon>
        <taxon>Streptophyta</taxon>
        <taxon>Embryophyta</taxon>
        <taxon>Tracheophyta</taxon>
        <taxon>Spermatophyta</taxon>
        <taxon>Magnoliopsida</taxon>
        <taxon>Liliopsida</taxon>
        <taxon>Poales</taxon>
        <taxon>Poaceae</taxon>
        <taxon>BOP clade</taxon>
        <taxon>Oryzoideae</taxon>
        <taxon>Oryzeae</taxon>
        <taxon>Oryzinae</taxon>
        <taxon>Oryza</taxon>
        <taxon>Oryza sativa</taxon>
    </lineage>
</organism>
<sequence length="1218" mass="136308">MLTKFETKSNRVKGLSFHPRRPWILASLHSGVIQMWDYRMGTLLDRFDEHDGPVRGVHFHATQPLFVSGGDDYKIKVWNYKTHRCLFTLHGHLDYIRTVQFHHECPWIVSASDDQTIRIWNWQSRTCVAVLTGHNHYVMCASFHPKEDLVVSASLDQTVRVWDISALRKKSVSPADDILRLTQMNTDLFGGVDAVVKYVLEGHDRGVNWASFHPTLPLIVSGADDRQVKIWRMNDTKAWEVDTLRGHMNNVSCVMFHAKQDIIVSNSEDKSIRIWDATKRTGIQTFRREHDRFWILSAHPEMNLLAAGHDSGMIVFKLERERPAFSVSGDTVFYVKDRFLRFFEFTTQKEVQLAPIRRPGSVSLNQSPKTLSYSPTENAVLICSDVDGGSYELYIVPKDSAGRADYLQDAKKGAGGSAVFVARNRFAVLEKSSNQVLVRNLKNEIVKKSPLPIATDAIYYAGTGSLLCKAEDRVTIFDLQQRLILGELQAPSVKYVVWSSDMESVALLSKHAVVIANKKLVHRCTLHETIRVKSGAWDENGVFIYTTLNHIKYCLPNGDSGIIKTLDVPIYITRVIGNNIFCLDRDGKNKLVTVDASEYIFKLALLRKRYDHVMSMIKNSQLCGQAVISYLQQKGFPEVALHFVKDEKTRFNLALESGNIQIAVASAKEIDDKDHWYRLGIEALRQGNVGIVEYAYQRTKNFERLAFLYLITGYMDKVGFMCKIAGQNNNLMGQFHNALYLGDAMKRVEILENAGQLPLAYITATTHGLTEIADRLAAELGENIPSLPEGKARSLLIPPAPLTASGDWPLLRVMRGIFEGGLDATGKAELEEDDEAAGADWGDEGLDIVDASEAMANGGDGFDAEEGEANEEDGEEGGWDLEDLELLPEAETPKNAGNARSAVFVAPPPGMPVSLIWTQKSSLAGEHAAAGNFDTAMRLLSRQLGIKNFAPLKPLFLDLHMGSHSYLHALATAPIIPVAVEKGWSESASPNVRGPPALVFTFPQMEDRLKAAYKATTDGKFPEALRQFLSILHTIPLIVVDSRREVDEVKELIEIVREYVLGLRMELKRKELRDDVNRQQELAAYFTNCKLQRVHMRLVLGSAMGLCYKQKNFATAEHFARMLLENNPNEAQARRARQVQQQCSGKKDSSELNYDYRNPFVVCGATYVPIYRGQKDVSCPYCGSRFVPSIEGQLCTICELAVVGADASGLVCSPTQLR</sequence>
<accession>Q9AUR7</accession>
<accession>Q0DP67</accession>
<accession>Q10E14</accession>